<sequence length="56" mass="6113">MKKVIMLLLIFALFAYALSASDPNKCLKKGSKCVSVGKPCCKPATCNIYANRCIGW</sequence>
<name>U321_DORVU</name>
<keyword id="KW-0903">Direct protein sequencing</keyword>
<keyword id="KW-1015">Disulfide bond</keyword>
<keyword id="KW-0960">Knottin</keyword>
<keyword id="KW-0964">Secreted</keyword>
<keyword id="KW-0732">Signal</keyword>
<keyword id="KW-0800">Toxin</keyword>
<dbReference type="SMR" id="P0DUS7"/>
<dbReference type="GO" id="GO:0005576">
    <property type="term" value="C:extracellular region"/>
    <property type="evidence" value="ECO:0007669"/>
    <property type="project" value="UniProtKB-SubCell"/>
</dbReference>
<dbReference type="GO" id="GO:0019855">
    <property type="term" value="F:calcium channel inhibitor activity"/>
    <property type="evidence" value="ECO:0007669"/>
    <property type="project" value="InterPro"/>
</dbReference>
<dbReference type="GO" id="GO:0090729">
    <property type="term" value="F:toxin activity"/>
    <property type="evidence" value="ECO:0007669"/>
    <property type="project" value="UniProtKB-KW"/>
</dbReference>
<dbReference type="InterPro" id="IPR012325">
    <property type="entry name" value="Assassin_bug_toxin-like"/>
</dbReference>
<dbReference type="Pfam" id="PF08117">
    <property type="entry name" value="Toxin_30"/>
    <property type="match status" value="1"/>
</dbReference>
<dbReference type="SUPFAM" id="SSF57059">
    <property type="entry name" value="omega toxin-like"/>
    <property type="match status" value="1"/>
</dbReference>
<organism>
    <name type="scientific">Doratifera vulnerans</name>
    <name type="common">Mottled cup moth</name>
    <dbReference type="NCBI Taxonomy" id="1372962"/>
    <lineage>
        <taxon>Eukaryota</taxon>
        <taxon>Metazoa</taxon>
        <taxon>Ecdysozoa</taxon>
        <taxon>Arthropoda</taxon>
        <taxon>Hexapoda</taxon>
        <taxon>Insecta</taxon>
        <taxon>Pterygota</taxon>
        <taxon>Neoptera</taxon>
        <taxon>Endopterygota</taxon>
        <taxon>Lepidoptera</taxon>
        <taxon>Glossata</taxon>
        <taxon>Ditrysia</taxon>
        <taxon>Zygaenoidea</taxon>
        <taxon>Limacodidae</taxon>
        <taxon>Doratifera</taxon>
    </lineage>
</organism>
<feature type="signal peptide" evidence="1">
    <location>
        <begin position="1"/>
        <end position="19"/>
    </location>
</feature>
<feature type="peptide" id="PRO_0000453403" description="U-limacoditoxin(3)-Dv21" evidence="1">
    <location>
        <begin position="20"/>
        <end position="56"/>
    </location>
</feature>
<feature type="disulfide bond" evidence="4">
    <location>
        <begin position="26"/>
        <end position="41"/>
    </location>
</feature>
<feature type="disulfide bond" evidence="4">
    <location>
        <begin position="33"/>
        <end position="46"/>
    </location>
</feature>
<feature type="disulfide bond" evidence="4">
    <location>
        <begin position="40"/>
        <end position="53"/>
    </location>
</feature>
<protein>
    <recommendedName>
        <fullName evidence="2">U-limacoditoxin(3)-Dv21</fullName>
        <shortName evidence="2">U-LCTX(3)-Dv21</shortName>
    </recommendedName>
    <alternativeName>
        <fullName evidence="2">Cecropin-like peptide</fullName>
    </alternativeName>
    <alternativeName>
        <fullName evidence="2">Vulnericin</fullName>
    </alternativeName>
</protein>
<accession>P0DUS7</accession>
<evidence type="ECO:0000269" key="1">
    <source>
    </source>
</evidence>
<evidence type="ECO:0000303" key="2">
    <source>
    </source>
</evidence>
<evidence type="ECO:0000305" key="3"/>
<evidence type="ECO:0000305" key="4">
    <source>
    </source>
</evidence>
<proteinExistence type="evidence at protein level"/>
<comment type="function">
    <text evidence="1">Probable toxin. Shows a moderate antiparasitic activity against the major pathogenic nematode of ruminants (H.contortus, IC(50)=22.1 uM). Does not show insecticidal activities. Does not induce increase in intracellular calcium in mouse DRG neurons, suggesting that it does not induce pain.</text>
</comment>
<comment type="subcellular location">
    <subcellularLocation>
        <location evidence="1">Secreted</location>
    </subcellularLocation>
</comment>
<comment type="tissue specificity">
    <text evidence="4">Expressed by the venom secretory cell of the spine. The spine is a cuticular structure containing a single large nucleated venom-secreting cell at its base. It is an independent unit capable of producing, storing and injecting venom. On the back of D.vulnerans caterpillars, spines are grouped together by 50 to 100 to form scoli, of which there are eight in D.vulnerans.</text>
</comment>
<comment type="developmental stage">
    <text evidence="1">Only secreted by larvae. Adult moth do not have spines.</text>
</comment>
<comment type="domain">
    <text evidence="4">The presence of a 'disulfide through disulfide knot' structurally defines this protein as a knottin.</text>
</comment>
<comment type="similarity">
    <text evidence="3">Belongs to the limacoditoxin-22 family.</text>
</comment>
<reference key="1">
    <citation type="journal article" date="2021" name="Proc. Natl. Acad. Sci. U.S.A.">
        <title>Production, composition, and mode of action of the painful defensive venom produced by a limacodid caterpillar, Doratifera vulnerans.</title>
        <authorList>
            <person name="Walker A.A."/>
            <person name="Robinson S.D."/>
            <person name="Paluzzi J.V."/>
            <person name="Merritt D.J."/>
            <person name="Nixon S.A."/>
            <person name="Schroeder C.I."/>
            <person name="Jin J."/>
            <person name="Goudarzi M.H."/>
            <person name="Kotze A.C."/>
            <person name="Dekan Z."/>
            <person name="Sombke A."/>
            <person name="Alewood P.F."/>
            <person name="Fry B.G."/>
            <person name="Epstein M.E."/>
            <person name="Vetter I."/>
            <person name="King G.F."/>
        </authorList>
    </citation>
    <scope>NUCLEOTIDE SEQUENCE [MRNA]</scope>
    <scope>PROTEIN SEQUENCE OF 20-56</scope>
    <scope>FUNCTION</scope>
    <scope>SUBCELLULAR LOCATION</scope>
    <scope>RECOMBINANT EXPRESSION</scope>
    <scope>IDENTIFICATION BY MASS SPECTROMETRY</scope>
    <source>
        <tissue>Venom</tissue>
    </source>
</reference>